<protein>
    <recommendedName>
        <fullName evidence="1">NAD(P)H-quinone oxidoreductase subunit J, chloroplastic</fullName>
        <ecNumber evidence="1">7.1.1.-</ecNumber>
    </recommendedName>
    <alternativeName>
        <fullName>NAD(P)H dehydrogenase subunit J</fullName>
    </alternativeName>
    <alternativeName>
        <fullName evidence="1">NADH-plastoquinone oxidoreductase subunit J</fullName>
    </alternativeName>
</protein>
<gene>
    <name evidence="1" type="primary">ndhJ</name>
    <name type="ORF">9311056</name>
</gene>
<comment type="function">
    <text evidence="1">NDH shuttles electrons from NAD(P)H:plastoquinone, via FMN and iron-sulfur (Fe-S) centers, to quinones in the photosynthetic chain and possibly in a chloroplast respiratory chain. The immediate electron acceptor for the enzyme in this species is believed to be plastoquinone. Couples the redox reaction to proton translocation, and thus conserves the redox energy in a proton gradient.</text>
</comment>
<comment type="catalytic activity">
    <reaction evidence="1">
        <text>a plastoquinone + NADH + (n+1) H(+)(in) = a plastoquinol + NAD(+) + n H(+)(out)</text>
        <dbReference type="Rhea" id="RHEA:42608"/>
        <dbReference type="Rhea" id="RHEA-COMP:9561"/>
        <dbReference type="Rhea" id="RHEA-COMP:9562"/>
        <dbReference type="ChEBI" id="CHEBI:15378"/>
        <dbReference type="ChEBI" id="CHEBI:17757"/>
        <dbReference type="ChEBI" id="CHEBI:57540"/>
        <dbReference type="ChEBI" id="CHEBI:57945"/>
        <dbReference type="ChEBI" id="CHEBI:62192"/>
    </reaction>
</comment>
<comment type="catalytic activity">
    <reaction evidence="1">
        <text>a plastoquinone + NADPH + (n+1) H(+)(in) = a plastoquinol + NADP(+) + n H(+)(out)</text>
        <dbReference type="Rhea" id="RHEA:42612"/>
        <dbReference type="Rhea" id="RHEA-COMP:9561"/>
        <dbReference type="Rhea" id="RHEA-COMP:9562"/>
        <dbReference type="ChEBI" id="CHEBI:15378"/>
        <dbReference type="ChEBI" id="CHEBI:17757"/>
        <dbReference type="ChEBI" id="CHEBI:57783"/>
        <dbReference type="ChEBI" id="CHEBI:58349"/>
        <dbReference type="ChEBI" id="CHEBI:62192"/>
    </reaction>
</comment>
<comment type="subunit">
    <text evidence="1">NDH is composed of at least 16 different subunits, 5 of which are encoded in the nucleus.</text>
</comment>
<comment type="subcellular location">
    <subcellularLocation>
        <location evidence="1">Plastid</location>
        <location evidence="1">Chloroplast thylakoid membrane</location>
        <topology evidence="1">Peripheral membrane protein</topology>
        <orientation evidence="1">Stromal side</orientation>
    </subcellularLocation>
</comment>
<comment type="similarity">
    <text evidence="1">Belongs to the complex I 30 kDa subunit family.</text>
</comment>
<comment type="sequence caution" evidence="2">
    <conflict type="erroneous initiation">
        <sequence resource="EMBL-CDS" id="AAS46057"/>
    </conflict>
</comment>
<keyword id="KW-0150">Chloroplast</keyword>
<keyword id="KW-0472">Membrane</keyword>
<keyword id="KW-0520">NAD</keyword>
<keyword id="KW-0521">NADP</keyword>
<keyword id="KW-0934">Plastid</keyword>
<keyword id="KW-0618">Plastoquinone</keyword>
<keyword id="KW-0874">Quinone</keyword>
<keyword id="KW-1185">Reference proteome</keyword>
<keyword id="KW-0793">Thylakoid</keyword>
<keyword id="KW-1278">Translocase</keyword>
<keyword id="KW-0813">Transport</keyword>
<reference key="1">
    <citation type="journal article" date="2004" name="Plant Physiol.">
        <title>A comparison of rice chloroplast genomes.</title>
        <authorList>
            <person name="Tang J."/>
            <person name="Xia H."/>
            <person name="Cao M."/>
            <person name="Zhang X."/>
            <person name="Zeng W."/>
            <person name="Hu S."/>
            <person name="Tong W."/>
            <person name="Wang J."/>
            <person name="Wang J."/>
            <person name="Yu J."/>
            <person name="Yang H."/>
            <person name="Zhu L."/>
        </authorList>
    </citation>
    <scope>NUCLEOTIDE SEQUENCE [LARGE SCALE GENOMIC DNA]</scope>
    <source>
        <strain>cv. 93-11</strain>
    </source>
</reference>
<accession>P0C339</accession>
<accession>P12200</accession>
<accession>Q6QY08</accession>
<accession>Q6QY72</accession>
<evidence type="ECO:0000255" key="1">
    <source>
        <dbReference type="HAMAP-Rule" id="MF_01357"/>
    </source>
</evidence>
<evidence type="ECO:0000305" key="2"/>
<geneLocation type="chloroplast"/>
<sequence length="159" mass="18783">MQQGWLSNWLVKHEVVHRSLGFDHRGIETLQIKAEDWDSIAVILYVYGYNYLRSQCAYDVAPGGSLASVYHLTRIQYGIDNPEEVCIKVFAQKDNPRIPSVFWIWRSSDFQERESFDMVGISYDNHPRLKRILMPESWIGWPLRKDYITPNFYEIQDAH</sequence>
<dbReference type="EC" id="7.1.1.-" evidence="1"/>
<dbReference type="EMBL" id="AY522329">
    <property type="protein sequence ID" value="AAS46057.1"/>
    <property type="status" value="ALT_INIT"/>
    <property type="molecule type" value="Genomic_DNA"/>
</dbReference>
<dbReference type="RefSeq" id="YP_009161367.1">
    <property type="nucleotide sequence ID" value="NC_027678.1"/>
</dbReference>
<dbReference type="RefSeq" id="YP_654217.2">
    <property type="nucleotide sequence ID" value="NC_008155.1"/>
</dbReference>
<dbReference type="SMR" id="P0C339"/>
<dbReference type="STRING" id="39946.P0C339"/>
<dbReference type="GeneID" id="4126867"/>
<dbReference type="Proteomes" id="UP000007015">
    <property type="component" value="Chloroplast"/>
</dbReference>
<dbReference type="GO" id="GO:0009535">
    <property type="term" value="C:chloroplast thylakoid membrane"/>
    <property type="evidence" value="ECO:0007669"/>
    <property type="project" value="UniProtKB-SubCell"/>
</dbReference>
<dbReference type="GO" id="GO:0009536">
    <property type="term" value="C:plastid"/>
    <property type="evidence" value="ECO:0000305"/>
    <property type="project" value="Gramene"/>
</dbReference>
<dbReference type="GO" id="GO:0008137">
    <property type="term" value="F:NADH dehydrogenase (ubiquinone) activity"/>
    <property type="evidence" value="ECO:0007669"/>
    <property type="project" value="InterPro"/>
</dbReference>
<dbReference type="GO" id="GO:0048038">
    <property type="term" value="F:quinone binding"/>
    <property type="evidence" value="ECO:0007669"/>
    <property type="project" value="UniProtKB-KW"/>
</dbReference>
<dbReference type="GO" id="GO:0019684">
    <property type="term" value="P:photosynthesis, light reaction"/>
    <property type="evidence" value="ECO:0007669"/>
    <property type="project" value="UniProtKB-UniRule"/>
</dbReference>
<dbReference type="Gene3D" id="3.30.460.80">
    <property type="entry name" value="NADH:ubiquinone oxidoreductase, 30kDa subunit"/>
    <property type="match status" value="1"/>
</dbReference>
<dbReference type="HAMAP" id="MF_01357">
    <property type="entry name" value="NDH1_NuoC"/>
    <property type="match status" value="1"/>
</dbReference>
<dbReference type="InterPro" id="IPR010218">
    <property type="entry name" value="NADH_DH_suC"/>
</dbReference>
<dbReference type="InterPro" id="IPR037232">
    <property type="entry name" value="NADH_quin_OxRdtase_su_C/D-like"/>
</dbReference>
<dbReference type="InterPro" id="IPR001268">
    <property type="entry name" value="NADH_UbQ_OxRdtase_30kDa_su"/>
</dbReference>
<dbReference type="InterPro" id="IPR020396">
    <property type="entry name" value="NADH_UbQ_OxRdtase_CS"/>
</dbReference>
<dbReference type="NCBIfam" id="NF009141">
    <property type="entry name" value="PRK12494.1"/>
    <property type="match status" value="1"/>
</dbReference>
<dbReference type="PANTHER" id="PTHR10884:SF14">
    <property type="entry name" value="NADH DEHYDROGENASE [UBIQUINONE] IRON-SULFUR PROTEIN 3, MITOCHONDRIAL"/>
    <property type="match status" value="1"/>
</dbReference>
<dbReference type="PANTHER" id="PTHR10884">
    <property type="entry name" value="NADH DEHYDROGENASE UBIQUINONE IRON-SULFUR PROTEIN 3"/>
    <property type="match status" value="1"/>
</dbReference>
<dbReference type="Pfam" id="PF00329">
    <property type="entry name" value="Complex1_30kDa"/>
    <property type="match status" value="1"/>
</dbReference>
<dbReference type="SUPFAM" id="SSF143243">
    <property type="entry name" value="Nqo5-like"/>
    <property type="match status" value="1"/>
</dbReference>
<dbReference type="PROSITE" id="PS00542">
    <property type="entry name" value="COMPLEX1_30K"/>
    <property type="match status" value="1"/>
</dbReference>
<organism>
    <name type="scientific">Oryza sativa subsp. indica</name>
    <name type="common">Rice</name>
    <dbReference type="NCBI Taxonomy" id="39946"/>
    <lineage>
        <taxon>Eukaryota</taxon>
        <taxon>Viridiplantae</taxon>
        <taxon>Streptophyta</taxon>
        <taxon>Embryophyta</taxon>
        <taxon>Tracheophyta</taxon>
        <taxon>Spermatophyta</taxon>
        <taxon>Magnoliopsida</taxon>
        <taxon>Liliopsida</taxon>
        <taxon>Poales</taxon>
        <taxon>Poaceae</taxon>
        <taxon>BOP clade</taxon>
        <taxon>Oryzoideae</taxon>
        <taxon>Oryzeae</taxon>
        <taxon>Oryzinae</taxon>
        <taxon>Oryza</taxon>
        <taxon>Oryza sativa</taxon>
    </lineage>
</organism>
<name>NDHJ_ORYSI</name>
<proteinExistence type="inferred from homology"/>
<feature type="chain" id="PRO_0000288704" description="NAD(P)H-quinone oxidoreductase subunit J, chloroplastic">
    <location>
        <begin position="1"/>
        <end position="159"/>
    </location>
</feature>